<reference key="1">
    <citation type="journal article" date="2005" name="Nature">
        <title>The map-based sequence of the rice genome.</title>
        <authorList>
            <consortium name="International rice genome sequencing project (IRGSP)"/>
        </authorList>
    </citation>
    <scope>NUCLEOTIDE SEQUENCE [LARGE SCALE GENOMIC DNA]</scope>
    <source>
        <strain>cv. Nipponbare</strain>
    </source>
</reference>
<reference key="2">
    <citation type="journal article" date="2008" name="Nucleic Acids Res.">
        <title>The rice annotation project database (RAP-DB): 2008 update.</title>
        <authorList>
            <consortium name="The rice annotation project (RAP)"/>
        </authorList>
    </citation>
    <scope>GENOME REANNOTATION</scope>
    <source>
        <strain>cv. Nipponbare</strain>
    </source>
</reference>
<reference key="3">
    <citation type="journal article" date="2013" name="Rice">
        <title>Improvement of the Oryza sativa Nipponbare reference genome using next generation sequence and optical map data.</title>
        <authorList>
            <person name="Kawahara Y."/>
            <person name="de la Bastide M."/>
            <person name="Hamilton J.P."/>
            <person name="Kanamori H."/>
            <person name="McCombie W.R."/>
            <person name="Ouyang S."/>
            <person name="Schwartz D.C."/>
            <person name="Tanaka T."/>
            <person name="Wu J."/>
            <person name="Zhou S."/>
            <person name="Childs K.L."/>
            <person name="Davidson R.M."/>
            <person name="Lin H."/>
            <person name="Quesada-Ocampo L."/>
            <person name="Vaillancourt B."/>
            <person name="Sakai H."/>
            <person name="Lee S.S."/>
            <person name="Kim J."/>
            <person name="Numa H."/>
            <person name="Itoh T."/>
            <person name="Buell C.R."/>
            <person name="Matsumoto T."/>
        </authorList>
    </citation>
    <scope>GENOME REANNOTATION</scope>
    <source>
        <strain>cv. Nipponbare</strain>
    </source>
</reference>
<reference key="4">
    <citation type="journal article" date="2005" name="PLoS Biol.">
        <title>The genomes of Oryza sativa: a history of duplications.</title>
        <authorList>
            <person name="Yu J."/>
            <person name="Wang J."/>
            <person name="Lin W."/>
            <person name="Li S."/>
            <person name="Li H."/>
            <person name="Zhou J."/>
            <person name="Ni P."/>
            <person name="Dong W."/>
            <person name="Hu S."/>
            <person name="Zeng C."/>
            <person name="Zhang J."/>
            <person name="Zhang Y."/>
            <person name="Li R."/>
            <person name="Xu Z."/>
            <person name="Li S."/>
            <person name="Li X."/>
            <person name="Zheng H."/>
            <person name="Cong L."/>
            <person name="Lin L."/>
            <person name="Yin J."/>
            <person name="Geng J."/>
            <person name="Li G."/>
            <person name="Shi J."/>
            <person name="Liu J."/>
            <person name="Lv H."/>
            <person name="Li J."/>
            <person name="Wang J."/>
            <person name="Deng Y."/>
            <person name="Ran L."/>
            <person name="Shi X."/>
            <person name="Wang X."/>
            <person name="Wu Q."/>
            <person name="Li C."/>
            <person name="Ren X."/>
            <person name="Wang J."/>
            <person name="Wang X."/>
            <person name="Li D."/>
            <person name="Liu D."/>
            <person name="Zhang X."/>
            <person name="Ji Z."/>
            <person name="Zhao W."/>
            <person name="Sun Y."/>
            <person name="Zhang Z."/>
            <person name="Bao J."/>
            <person name="Han Y."/>
            <person name="Dong L."/>
            <person name="Ji J."/>
            <person name="Chen P."/>
            <person name="Wu S."/>
            <person name="Liu J."/>
            <person name="Xiao Y."/>
            <person name="Bu D."/>
            <person name="Tan J."/>
            <person name="Yang L."/>
            <person name="Ye C."/>
            <person name="Zhang J."/>
            <person name="Xu J."/>
            <person name="Zhou Y."/>
            <person name="Yu Y."/>
            <person name="Zhang B."/>
            <person name="Zhuang S."/>
            <person name="Wei H."/>
            <person name="Liu B."/>
            <person name="Lei M."/>
            <person name="Yu H."/>
            <person name="Li Y."/>
            <person name="Xu H."/>
            <person name="Wei S."/>
            <person name="He X."/>
            <person name="Fang L."/>
            <person name="Zhang Z."/>
            <person name="Zhang Y."/>
            <person name="Huang X."/>
            <person name="Su Z."/>
            <person name="Tong W."/>
            <person name="Li J."/>
            <person name="Tong Z."/>
            <person name="Li S."/>
            <person name="Ye J."/>
            <person name="Wang L."/>
            <person name="Fang L."/>
            <person name="Lei T."/>
            <person name="Chen C.-S."/>
            <person name="Chen H.-C."/>
            <person name="Xu Z."/>
            <person name="Li H."/>
            <person name="Huang H."/>
            <person name="Zhang F."/>
            <person name="Xu H."/>
            <person name="Li N."/>
            <person name="Zhao C."/>
            <person name="Li S."/>
            <person name="Dong L."/>
            <person name="Huang Y."/>
            <person name="Li L."/>
            <person name="Xi Y."/>
            <person name="Qi Q."/>
            <person name="Li W."/>
            <person name="Zhang B."/>
            <person name="Hu W."/>
            <person name="Zhang Y."/>
            <person name="Tian X."/>
            <person name="Jiao Y."/>
            <person name="Liang X."/>
            <person name="Jin J."/>
            <person name="Gao L."/>
            <person name="Zheng W."/>
            <person name="Hao B."/>
            <person name="Liu S.-M."/>
            <person name="Wang W."/>
            <person name="Yuan L."/>
            <person name="Cao M."/>
            <person name="McDermott J."/>
            <person name="Samudrala R."/>
            <person name="Wang J."/>
            <person name="Wong G.K.-S."/>
            <person name="Yang H."/>
        </authorList>
    </citation>
    <scope>NUCLEOTIDE SEQUENCE [LARGE SCALE GENOMIC DNA]</scope>
    <source>
        <strain>cv. Nipponbare</strain>
    </source>
</reference>
<reference key="5">
    <citation type="journal article" date="2003" name="Science">
        <title>Collection, mapping, and annotation of over 28,000 cDNA clones from japonica rice.</title>
        <authorList>
            <consortium name="The rice full-length cDNA consortium"/>
        </authorList>
    </citation>
    <scope>NUCLEOTIDE SEQUENCE [LARGE SCALE MRNA]</scope>
    <source>
        <strain>cv. Nipponbare</strain>
    </source>
</reference>
<protein>
    <recommendedName>
        <fullName evidence="1">UMP-CMP kinase 1</fullName>
        <ecNumber evidence="1">2.7.4.14</ecNumber>
    </recommendedName>
    <alternativeName>
        <fullName evidence="1">Deoxycytidylate kinase 1</fullName>
        <shortName evidence="1">CK 1</shortName>
        <shortName evidence="1">dCMP kinase 1</shortName>
    </alternativeName>
    <alternativeName>
        <fullName evidence="1">Uridine monophosphate/cytidine monophosphate kinase 1</fullName>
        <shortName evidence="1">UMP/CMP kinase 1</shortName>
        <shortName evidence="1">UMP/CMPK 1</shortName>
    </alternativeName>
</protein>
<keyword id="KW-0067">ATP-binding</keyword>
<keyword id="KW-0963">Cytoplasm</keyword>
<keyword id="KW-0418">Kinase</keyword>
<keyword id="KW-0547">Nucleotide-binding</keyword>
<keyword id="KW-0539">Nucleus</keyword>
<keyword id="KW-0665">Pyrimidine biosynthesis</keyword>
<keyword id="KW-1185">Reference proteome</keyword>
<keyword id="KW-0808">Transferase</keyword>
<gene>
    <name type="ordered locus">Os06g0109600</name>
    <name type="ordered locus">LOC_Os06g02000</name>
    <name type="ORF">OsJ_19856</name>
    <name type="ORF">OSJNBa0004I20.14</name>
    <name type="ORF">P0514G12.38</name>
</gene>
<sequence length="243" mass="27947">MAHANKNHIESFPPPGKKITIVFVIGGPGSGKGTQCAKIVKQFGFTHLSAGDLLREEAKYDTEQGTMIKNLMNEGKLVSSDLIVKLLFKAMRESGNDKFLVDGFPRNEENRHAYENIIHIEPEFLLFIDCSKEEMERRILNRNQGRDDDNIDTIRRRFDVFQQQTLPVIQYYEKRGKLRKVDGNRQVDEVFEDVKAIFAQLNNQKIHGGQQASGLSRAQMNPLKRWFFDFFCGCFGTKEEARN</sequence>
<accession>Q5VRN0</accession>
<accession>A0A0P0WRX7</accession>
<organism>
    <name type="scientific">Oryza sativa subsp. japonica</name>
    <name type="common">Rice</name>
    <dbReference type="NCBI Taxonomy" id="39947"/>
    <lineage>
        <taxon>Eukaryota</taxon>
        <taxon>Viridiplantae</taxon>
        <taxon>Streptophyta</taxon>
        <taxon>Embryophyta</taxon>
        <taxon>Tracheophyta</taxon>
        <taxon>Spermatophyta</taxon>
        <taxon>Magnoliopsida</taxon>
        <taxon>Liliopsida</taxon>
        <taxon>Poales</taxon>
        <taxon>Poaceae</taxon>
        <taxon>BOP clade</taxon>
        <taxon>Oryzoideae</taxon>
        <taxon>Oryzeae</taxon>
        <taxon>Oryzinae</taxon>
        <taxon>Oryza</taxon>
        <taxon>Oryza sativa</taxon>
    </lineage>
</organism>
<comment type="function">
    <text evidence="1">Catalyzes the phosphorylation of pyrimidine nucleoside monophosphates at the expense of ATP. Plays an important role in de novo pyrimidine nucleotide biosynthesis. Has preference for UMP and CMP as phosphate acceptors.</text>
</comment>
<comment type="catalytic activity">
    <reaction evidence="1">
        <text>UMP + ATP = UDP + ADP</text>
        <dbReference type="Rhea" id="RHEA:24400"/>
        <dbReference type="ChEBI" id="CHEBI:30616"/>
        <dbReference type="ChEBI" id="CHEBI:57865"/>
        <dbReference type="ChEBI" id="CHEBI:58223"/>
        <dbReference type="ChEBI" id="CHEBI:456216"/>
        <dbReference type="EC" id="2.7.4.14"/>
    </reaction>
</comment>
<comment type="catalytic activity">
    <reaction evidence="1">
        <text>CMP + ATP = CDP + ADP</text>
        <dbReference type="Rhea" id="RHEA:11600"/>
        <dbReference type="ChEBI" id="CHEBI:30616"/>
        <dbReference type="ChEBI" id="CHEBI:58069"/>
        <dbReference type="ChEBI" id="CHEBI:60377"/>
        <dbReference type="ChEBI" id="CHEBI:456216"/>
        <dbReference type="EC" id="2.7.4.14"/>
    </reaction>
</comment>
<comment type="catalytic activity">
    <reaction evidence="1">
        <text>dCMP + ATP = dCDP + ADP</text>
        <dbReference type="Rhea" id="RHEA:25094"/>
        <dbReference type="ChEBI" id="CHEBI:30616"/>
        <dbReference type="ChEBI" id="CHEBI:57566"/>
        <dbReference type="ChEBI" id="CHEBI:58593"/>
        <dbReference type="ChEBI" id="CHEBI:456216"/>
        <dbReference type="EC" id="2.7.4.14"/>
    </reaction>
</comment>
<comment type="cofactor">
    <cofactor evidence="1">
        <name>Mg(2+)</name>
        <dbReference type="ChEBI" id="CHEBI:18420"/>
    </cofactor>
    <text evidence="1">Binds 1 Mg(2+) ion per monomer.</text>
</comment>
<comment type="subunit">
    <text evidence="1">Monomer.</text>
</comment>
<comment type="subcellular location">
    <subcellularLocation>
        <location evidence="1">Cytoplasm</location>
    </subcellularLocation>
    <subcellularLocation>
        <location evidence="1">Nucleus</location>
    </subcellularLocation>
</comment>
<comment type="domain">
    <text evidence="1">Consists of three domains, a large central CORE domain and two small peripheral domains, NMPbind and LID, which undergo movements during catalysis. The LID domain closes over the site of phosphoryl transfer upon ATP binding. Assembling and dissambling the active center during each catalytic cycle provides an effective means to prevent ATP hydrolysis.</text>
</comment>
<comment type="similarity">
    <text evidence="1">Belongs to the adenylate kinase family. UMP-CMP kinase subfamily.</text>
</comment>
<name>KCY1_ORYSJ</name>
<proteinExistence type="evidence at transcript level"/>
<dbReference type="EC" id="2.7.4.14" evidence="1"/>
<dbReference type="EMBL" id="AP000616">
    <property type="protein sequence ID" value="BAD67693.1"/>
    <property type="molecule type" value="Genomic_DNA"/>
</dbReference>
<dbReference type="EMBL" id="AP002805">
    <property type="protein sequence ID" value="BAD67896.1"/>
    <property type="molecule type" value="Genomic_DNA"/>
</dbReference>
<dbReference type="EMBL" id="AP008212">
    <property type="protein sequence ID" value="BAF18492.1"/>
    <property type="molecule type" value="Genomic_DNA"/>
</dbReference>
<dbReference type="EMBL" id="AP014962">
    <property type="protein sequence ID" value="BAS95779.1"/>
    <property type="molecule type" value="Genomic_DNA"/>
</dbReference>
<dbReference type="EMBL" id="CM000143">
    <property type="protein sequence ID" value="EEE64963.1"/>
    <property type="molecule type" value="Genomic_DNA"/>
</dbReference>
<dbReference type="EMBL" id="AK066989">
    <property type="protein sequence ID" value="BAG90214.1"/>
    <property type="molecule type" value="mRNA"/>
</dbReference>
<dbReference type="RefSeq" id="XP_015641837.1">
    <property type="nucleotide sequence ID" value="XM_015786351.1"/>
</dbReference>
<dbReference type="RefSeq" id="XP_015641838.1">
    <property type="nucleotide sequence ID" value="XM_015786352.1"/>
</dbReference>
<dbReference type="SMR" id="Q5VRN0"/>
<dbReference type="FunCoup" id="Q5VRN0">
    <property type="interactions" value="2177"/>
</dbReference>
<dbReference type="STRING" id="39947.Q5VRN0"/>
<dbReference type="PaxDb" id="39947-Q5VRN0"/>
<dbReference type="EnsemblPlants" id="Os06t0109600-01">
    <property type="protein sequence ID" value="Os06t0109600-01"/>
    <property type="gene ID" value="Os06g0109600"/>
</dbReference>
<dbReference type="GeneID" id="4339882"/>
<dbReference type="Gramene" id="Os06t0109600-01">
    <property type="protein sequence ID" value="Os06t0109600-01"/>
    <property type="gene ID" value="Os06g0109600"/>
</dbReference>
<dbReference type="KEGG" id="dosa:Os06g0109600"/>
<dbReference type="KEGG" id="osa:4339882"/>
<dbReference type="eggNOG" id="KOG3079">
    <property type="taxonomic scope" value="Eukaryota"/>
</dbReference>
<dbReference type="HOGENOM" id="CLU_032354_0_1_1"/>
<dbReference type="InParanoid" id="Q5VRN0"/>
<dbReference type="OMA" id="NRQAYEN"/>
<dbReference type="OrthoDB" id="442176at2759"/>
<dbReference type="Proteomes" id="UP000000763">
    <property type="component" value="Chromosome 6"/>
</dbReference>
<dbReference type="Proteomes" id="UP000007752">
    <property type="component" value="Chromosome 6"/>
</dbReference>
<dbReference type="Proteomes" id="UP000059680">
    <property type="component" value="Chromosome 6"/>
</dbReference>
<dbReference type="GO" id="GO:0005737">
    <property type="term" value="C:cytoplasm"/>
    <property type="evidence" value="ECO:0000318"/>
    <property type="project" value="GO_Central"/>
</dbReference>
<dbReference type="GO" id="GO:0005634">
    <property type="term" value="C:nucleus"/>
    <property type="evidence" value="ECO:0000318"/>
    <property type="project" value="GO_Central"/>
</dbReference>
<dbReference type="GO" id="GO:0004127">
    <property type="term" value="F:(d)CMP kinase activity"/>
    <property type="evidence" value="ECO:0000318"/>
    <property type="project" value="GO_Central"/>
</dbReference>
<dbReference type="GO" id="GO:0005524">
    <property type="term" value="F:ATP binding"/>
    <property type="evidence" value="ECO:0007669"/>
    <property type="project" value="UniProtKB-KW"/>
</dbReference>
<dbReference type="GO" id="GO:0036430">
    <property type="term" value="F:CMP kinase activity"/>
    <property type="evidence" value="ECO:0007669"/>
    <property type="project" value="RHEA"/>
</dbReference>
<dbReference type="GO" id="GO:0036431">
    <property type="term" value="F:dCMP kinase activity"/>
    <property type="evidence" value="ECO:0007669"/>
    <property type="project" value="RHEA"/>
</dbReference>
<dbReference type="GO" id="GO:0033862">
    <property type="term" value="F:UMP kinase activity"/>
    <property type="evidence" value="ECO:0000318"/>
    <property type="project" value="GO_Central"/>
</dbReference>
<dbReference type="GO" id="GO:0006207">
    <property type="term" value="P:'de novo' pyrimidine nucleobase biosynthetic process"/>
    <property type="evidence" value="ECO:0007669"/>
    <property type="project" value="InterPro"/>
</dbReference>
<dbReference type="GO" id="GO:0046705">
    <property type="term" value="P:CDP biosynthetic process"/>
    <property type="evidence" value="ECO:0000318"/>
    <property type="project" value="GO_Central"/>
</dbReference>
<dbReference type="GO" id="GO:0006225">
    <property type="term" value="P:UDP biosynthetic process"/>
    <property type="evidence" value="ECO:0000318"/>
    <property type="project" value="GO_Central"/>
</dbReference>
<dbReference type="CDD" id="cd01428">
    <property type="entry name" value="ADK"/>
    <property type="match status" value="1"/>
</dbReference>
<dbReference type="FunFam" id="3.40.50.300:FF:000315">
    <property type="entry name" value="Adenylate kinase 1"/>
    <property type="match status" value="1"/>
</dbReference>
<dbReference type="Gene3D" id="3.40.50.300">
    <property type="entry name" value="P-loop containing nucleotide triphosphate hydrolases"/>
    <property type="match status" value="1"/>
</dbReference>
<dbReference type="HAMAP" id="MF_00235">
    <property type="entry name" value="Adenylate_kinase_Adk"/>
    <property type="match status" value="1"/>
</dbReference>
<dbReference type="HAMAP" id="MF_03172">
    <property type="entry name" value="Adenylate_kinase_UMP_CMP_kin"/>
    <property type="match status" value="1"/>
</dbReference>
<dbReference type="InterPro" id="IPR000850">
    <property type="entry name" value="Adenylat/UMP-CMP_kin"/>
</dbReference>
<dbReference type="InterPro" id="IPR033690">
    <property type="entry name" value="Adenylat_kinase_CS"/>
</dbReference>
<dbReference type="InterPro" id="IPR027417">
    <property type="entry name" value="P-loop_NTPase"/>
</dbReference>
<dbReference type="InterPro" id="IPR006266">
    <property type="entry name" value="UMP_CMP_kinase"/>
</dbReference>
<dbReference type="NCBIfam" id="TIGR01359">
    <property type="entry name" value="UMP_CMP_kin_fam"/>
    <property type="match status" value="1"/>
</dbReference>
<dbReference type="PANTHER" id="PTHR23359">
    <property type="entry name" value="NUCLEOTIDE KINASE"/>
    <property type="match status" value="1"/>
</dbReference>
<dbReference type="Pfam" id="PF00406">
    <property type="entry name" value="ADK"/>
    <property type="match status" value="1"/>
</dbReference>
<dbReference type="PRINTS" id="PR00094">
    <property type="entry name" value="ADENYLTKNASE"/>
</dbReference>
<dbReference type="SUPFAM" id="SSF52540">
    <property type="entry name" value="P-loop containing nucleoside triphosphate hydrolases"/>
    <property type="match status" value="1"/>
</dbReference>
<dbReference type="PROSITE" id="PS00113">
    <property type="entry name" value="ADENYLATE_KINASE"/>
    <property type="match status" value="1"/>
</dbReference>
<evidence type="ECO:0000255" key="1">
    <source>
        <dbReference type="HAMAP-Rule" id="MF_03172"/>
    </source>
</evidence>
<feature type="chain" id="PRO_0000430121" description="UMP-CMP kinase 1">
    <location>
        <begin position="1"/>
        <end position="243"/>
    </location>
</feature>
<feature type="region of interest" description="NMP" evidence="1">
    <location>
        <begin position="49"/>
        <end position="78"/>
    </location>
</feature>
<feature type="region of interest" description="LID" evidence="1">
    <location>
        <begin position="141"/>
        <end position="149"/>
    </location>
</feature>
<feature type="binding site" evidence="1">
    <location>
        <begin position="29"/>
        <end position="34"/>
    </location>
    <ligand>
        <name>ATP</name>
        <dbReference type="ChEBI" id="CHEBI:30616"/>
    </ligand>
</feature>
<feature type="binding site" evidence="1">
    <location>
        <position position="55"/>
    </location>
    <ligand>
        <name>a ribonucleoside 5'-phosphate</name>
        <dbReference type="ChEBI" id="CHEBI:58043"/>
    </ligand>
</feature>
<feature type="binding site" evidence="1">
    <location>
        <begin position="76"/>
        <end position="78"/>
    </location>
    <ligand>
        <name>a ribonucleoside 5'-phosphate</name>
        <dbReference type="ChEBI" id="CHEBI:58043"/>
    </ligand>
</feature>
<feature type="binding site" evidence="1">
    <location>
        <begin position="103"/>
        <end position="106"/>
    </location>
    <ligand>
        <name>a ribonucleoside 5'-phosphate</name>
        <dbReference type="ChEBI" id="CHEBI:58043"/>
    </ligand>
</feature>
<feature type="binding site" evidence="1">
    <location>
        <position position="110"/>
    </location>
    <ligand>
        <name>CMP</name>
        <dbReference type="ChEBI" id="CHEBI:60377"/>
    </ligand>
</feature>
<feature type="binding site" evidence="1">
    <location>
        <position position="142"/>
    </location>
    <ligand>
        <name>ATP</name>
        <dbReference type="ChEBI" id="CHEBI:30616"/>
    </ligand>
</feature>
<feature type="binding site" evidence="1">
    <location>
        <position position="146"/>
    </location>
    <ligand>
        <name>a ribonucleoside 5'-phosphate</name>
        <dbReference type="ChEBI" id="CHEBI:58043"/>
    </ligand>
</feature>
<feature type="binding site" evidence="1">
    <location>
        <position position="157"/>
    </location>
    <ligand>
        <name>a ribonucleoside 5'-phosphate</name>
        <dbReference type="ChEBI" id="CHEBI:58043"/>
    </ligand>
</feature>
<feature type="binding site" evidence="1">
    <location>
        <position position="185"/>
    </location>
    <ligand>
        <name>ATP</name>
        <dbReference type="ChEBI" id="CHEBI:30616"/>
    </ligand>
</feature>